<evidence type="ECO:0000255" key="1">
    <source>
        <dbReference type="HAMAP-Rule" id="MF_01108"/>
    </source>
</evidence>
<evidence type="ECO:0000305" key="2"/>
<comment type="function">
    <text evidence="1">Catalyzes the hydrolysis of the amide bond of N(2)-acetylated L-amino acids. Cleaves the acetyl group from N-acetyl-L-ornithine to form L-ornithine, an intermediate in L-arginine biosynthesis pathway, and a branchpoint in the synthesis of polyamines.</text>
</comment>
<comment type="catalytic activity">
    <reaction evidence="1">
        <text>N(2)-acetyl-L-ornithine + H2O = L-ornithine + acetate</text>
        <dbReference type="Rhea" id="RHEA:15941"/>
        <dbReference type="ChEBI" id="CHEBI:15377"/>
        <dbReference type="ChEBI" id="CHEBI:30089"/>
        <dbReference type="ChEBI" id="CHEBI:46911"/>
        <dbReference type="ChEBI" id="CHEBI:57805"/>
        <dbReference type="EC" id="3.5.1.16"/>
    </reaction>
</comment>
<comment type="cofactor">
    <cofactor evidence="1">
        <name>Zn(2+)</name>
        <dbReference type="ChEBI" id="CHEBI:29105"/>
    </cofactor>
    <cofactor evidence="1">
        <name>Co(2+)</name>
        <dbReference type="ChEBI" id="CHEBI:48828"/>
    </cofactor>
    <text evidence="1">Binds 2 Zn(2+) or Co(2+) ions per subunit.</text>
</comment>
<comment type="cofactor">
    <cofactor evidence="1">
        <name>glutathione</name>
        <dbReference type="ChEBI" id="CHEBI:57925"/>
    </cofactor>
</comment>
<comment type="pathway">
    <text evidence="1">Amino-acid biosynthesis; L-arginine biosynthesis; L-ornithine from N(2)-acetyl-L-ornithine (linear): step 1/1.</text>
</comment>
<comment type="subunit">
    <text evidence="1">Homodimer.</text>
</comment>
<comment type="subcellular location">
    <subcellularLocation>
        <location evidence="1">Cytoplasm</location>
    </subcellularLocation>
</comment>
<comment type="similarity">
    <text evidence="1 2">Belongs to the peptidase M20A family. ArgE subfamily.</text>
</comment>
<protein>
    <recommendedName>
        <fullName evidence="1">Acetylornithine deacetylase</fullName>
        <shortName evidence="1">AO</shortName>
        <shortName evidence="1">Acetylornithinase</shortName>
        <ecNumber evidence="1">3.5.1.16</ecNumber>
    </recommendedName>
    <alternativeName>
        <fullName evidence="1">N-acetylornithinase</fullName>
        <shortName evidence="1">NAO</shortName>
    </alternativeName>
</protein>
<gene>
    <name evidence="1" type="primary">argE</name>
</gene>
<dbReference type="EC" id="3.5.1.16" evidence="1"/>
<dbReference type="EMBL" id="AF055904">
    <property type="protein sequence ID" value="AAC82366.1"/>
    <property type="molecule type" value="Genomic_DNA"/>
</dbReference>
<dbReference type="RefSeq" id="WP_011551133.1">
    <property type="nucleotide sequence ID" value="NZ_JABFNQ010000007.1"/>
</dbReference>
<dbReference type="SMR" id="O68873"/>
<dbReference type="GeneID" id="41358467"/>
<dbReference type="OMA" id="PAMREEY"/>
<dbReference type="UniPathway" id="UPA00068">
    <property type="reaction ID" value="UER00110"/>
</dbReference>
<dbReference type="GO" id="GO:0005737">
    <property type="term" value="C:cytoplasm"/>
    <property type="evidence" value="ECO:0007669"/>
    <property type="project" value="UniProtKB-SubCell"/>
</dbReference>
<dbReference type="GO" id="GO:0008777">
    <property type="term" value="F:acetylornithine deacetylase activity"/>
    <property type="evidence" value="ECO:0007669"/>
    <property type="project" value="UniProtKB-EC"/>
</dbReference>
<dbReference type="GO" id="GO:0046872">
    <property type="term" value="F:metal ion binding"/>
    <property type="evidence" value="ECO:0007669"/>
    <property type="project" value="UniProtKB-KW"/>
</dbReference>
<dbReference type="GO" id="GO:0006526">
    <property type="term" value="P:L-arginine biosynthetic process"/>
    <property type="evidence" value="ECO:0007669"/>
    <property type="project" value="UniProtKB-UniPathway"/>
</dbReference>
<dbReference type="CDD" id="cd03894">
    <property type="entry name" value="M20_ArgE"/>
    <property type="match status" value="1"/>
</dbReference>
<dbReference type="Gene3D" id="3.30.70.360">
    <property type="match status" value="1"/>
</dbReference>
<dbReference type="Gene3D" id="3.40.630.10">
    <property type="entry name" value="Zn peptidases"/>
    <property type="match status" value="1"/>
</dbReference>
<dbReference type="HAMAP" id="MF_01108">
    <property type="entry name" value="ArgE"/>
    <property type="match status" value="1"/>
</dbReference>
<dbReference type="InterPro" id="IPR010169">
    <property type="entry name" value="AcOrn-deacetyl"/>
</dbReference>
<dbReference type="InterPro" id="IPR001261">
    <property type="entry name" value="ArgE/DapE_CS"/>
</dbReference>
<dbReference type="InterPro" id="IPR036264">
    <property type="entry name" value="Bact_exopeptidase_dim_dom"/>
</dbReference>
<dbReference type="InterPro" id="IPR002933">
    <property type="entry name" value="Peptidase_M20"/>
</dbReference>
<dbReference type="InterPro" id="IPR011650">
    <property type="entry name" value="Peptidase_M20_dimer"/>
</dbReference>
<dbReference type="InterPro" id="IPR050072">
    <property type="entry name" value="Peptidase_M20A"/>
</dbReference>
<dbReference type="NCBIfam" id="TIGR01892">
    <property type="entry name" value="AcOrn-deacetyl"/>
    <property type="match status" value="1"/>
</dbReference>
<dbReference type="PANTHER" id="PTHR43808">
    <property type="entry name" value="ACETYLORNITHINE DEACETYLASE"/>
    <property type="match status" value="1"/>
</dbReference>
<dbReference type="PANTHER" id="PTHR43808:SF31">
    <property type="entry name" value="N-ACETYL-L-CITRULLINE DEACETYLASE"/>
    <property type="match status" value="1"/>
</dbReference>
<dbReference type="Pfam" id="PF07687">
    <property type="entry name" value="M20_dimer"/>
    <property type="match status" value="1"/>
</dbReference>
<dbReference type="Pfam" id="PF01546">
    <property type="entry name" value="Peptidase_M20"/>
    <property type="match status" value="1"/>
</dbReference>
<dbReference type="SUPFAM" id="SSF55031">
    <property type="entry name" value="Bacterial exopeptidase dimerisation domain"/>
    <property type="match status" value="1"/>
</dbReference>
<dbReference type="SUPFAM" id="SSF53187">
    <property type="entry name" value="Zn-dependent exopeptidases"/>
    <property type="match status" value="1"/>
</dbReference>
<dbReference type="PROSITE" id="PS00759">
    <property type="entry name" value="ARGE_DAPE_CPG2_2"/>
    <property type="match status" value="1"/>
</dbReference>
<organism>
    <name type="scientific">Myxococcus xanthus</name>
    <dbReference type="NCBI Taxonomy" id="34"/>
    <lineage>
        <taxon>Bacteria</taxon>
        <taxon>Pseudomonadati</taxon>
        <taxon>Myxococcota</taxon>
        <taxon>Myxococcia</taxon>
        <taxon>Myxococcales</taxon>
        <taxon>Cystobacterineae</taxon>
        <taxon>Myxococcaceae</taxon>
        <taxon>Myxococcus</taxon>
    </lineage>
</organism>
<accession>O68873</accession>
<name>ARGE_MYXXA</name>
<keyword id="KW-0028">Amino-acid biosynthesis</keyword>
<keyword id="KW-0055">Arginine biosynthesis</keyword>
<keyword id="KW-0170">Cobalt</keyword>
<keyword id="KW-0963">Cytoplasm</keyword>
<keyword id="KW-0378">Hydrolase</keyword>
<keyword id="KW-0479">Metal-binding</keyword>
<keyword id="KW-0862">Zinc</keyword>
<proteinExistence type="evidence at protein level"/>
<reference key="1">
    <citation type="journal article" date="1998" name="J. Bacteriol.">
        <title>Identification and characterization of the Myxococcus xanthus argE gene.</title>
        <authorList>
            <person name="Harris B.Z."/>
            <person name="Singer M."/>
        </authorList>
    </citation>
    <scope>NUCLEOTIDE SEQUENCE [GENOMIC DNA]</scope>
    <scope>CHARACTERIZATION</scope>
    <source>
        <strain>DK101</strain>
    </source>
</reference>
<sequence>MSDTLPALRATLTELVAMDTTSFRPNVPLIDYAQARLEAAGFSAERQKFLDDAGVEKVNLVAVKGGSGSGRAALALVGHSDCVPYDAAWTDALRLTEKDGRLYARGACDTKGFIACALHAALNAEQLKAPLMVVLTADEEVGLTGAKKLVEAGLGRARHAIVGEPTRLIPVRANKGYCLAEVEVRGKEGHSAYPDSGASAIFRAGRFLQRLEHLALTVLREDLDEGFQPPFTTVNVGVIQGGKAKNVIPGACRFVVEWRPIPGQPPERVSQLLETIRQELVRDEPAFEAQIRVVRTDRGVNTRADAEVVRFLAEASGNAPETVSFGTEAPQMTELGAEAVVFGPGDIRVAHQTGEYVPVEDLVRCEAVLARAVAHFCGGR</sequence>
<feature type="chain" id="PRO_0000185245" description="Acetylornithine deacetylase">
    <location>
        <begin position="1"/>
        <end position="380"/>
    </location>
</feature>
<feature type="active site" evidence="1">
    <location>
        <position position="81"/>
    </location>
</feature>
<feature type="active site" evidence="1">
    <location>
        <position position="139"/>
    </location>
</feature>
<feature type="binding site" evidence="1">
    <location>
        <position position="79"/>
    </location>
    <ligand>
        <name>Zn(2+)</name>
        <dbReference type="ChEBI" id="CHEBI:29105"/>
        <label>1</label>
    </ligand>
</feature>
<feature type="binding site" evidence="1">
    <location>
        <position position="109"/>
    </location>
    <ligand>
        <name>Zn(2+)</name>
        <dbReference type="ChEBI" id="CHEBI:29105"/>
        <label>1</label>
    </ligand>
</feature>
<feature type="binding site" evidence="1">
    <location>
        <position position="109"/>
    </location>
    <ligand>
        <name>Zn(2+)</name>
        <dbReference type="ChEBI" id="CHEBI:29105"/>
        <label>2</label>
    </ligand>
</feature>
<feature type="binding site" evidence="1">
    <location>
        <position position="140"/>
    </location>
    <ligand>
        <name>Zn(2+)</name>
        <dbReference type="ChEBI" id="CHEBI:29105"/>
        <label>2</label>
    </ligand>
</feature>
<feature type="binding site" evidence="1">
    <location>
        <position position="164"/>
    </location>
    <ligand>
        <name>Zn(2+)</name>
        <dbReference type="ChEBI" id="CHEBI:29105"/>
        <label>1</label>
    </ligand>
</feature>
<feature type="binding site" evidence="1">
    <location>
        <position position="351"/>
    </location>
    <ligand>
        <name>Zn(2+)</name>
        <dbReference type="ChEBI" id="CHEBI:29105"/>
        <label>2</label>
    </ligand>
</feature>